<sequence>MIELKGLTKVFRQNGQEIVALSDVNLHVPRGQIFGILGQSGAGKSTLIRCVNLLERPTAGEVWVDGREITRLSPGELRAARREMGMIFQQFNLFDSRTVFGNVAYPLEVAGWPRARIRERVEELLALVGLADKAGAYPNQLSGGQKQRVGIARALAPGPKLLLSDEATSALDPDTTRSVLALLREINRRLGLTILLITHQMEVVKQVCDSVAILEEGKVVEQGGVLELIGRPGSRLRELFYESTEEAAHRIHPDGVRVLLFFVGASADRPLISETVRRFRVDANILQGAVERIAGATVGRLLVEFTGLPEDIQDALRFLEEQGASPEVIPNG</sequence>
<comment type="function">
    <text evidence="1">Part of the ABC transporter complex MetNIQ involved in methionine import. Responsible for energy coupling to the transport system.</text>
</comment>
<comment type="catalytic activity">
    <reaction evidence="1">
        <text>L-methionine(out) + ATP + H2O = L-methionine(in) + ADP + phosphate + H(+)</text>
        <dbReference type="Rhea" id="RHEA:29779"/>
        <dbReference type="ChEBI" id="CHEBI:15377"/>
        <dbReference type="ChEBI" id="CHEBI:15378"/>
        <dbReference type="ChEBI" id="CHEBI:30616"/>
        <dbReference type="ChEBI" id="CHEBI:43474"/>
        <dbReference type="ChEBI" id="CHEBI:57844"/>
        <dbReference type="ChEBI" id="CHEBI:456216"/>
        <dbReference type="EC" id="7.4.2.11"/>
    </reaction>
</comment>
<comment type="catalytic activity">
    <reaction evidence="1">
        <text>D-methionine(out) + ATP + H2O = D-methionine(in) + ADP + phosphate + H(+)</text>
        <dbReference type="Rhea" id="RHEA:29767"/>
        <dbReference type="ChEBI" id="CHEBI:15377"/>
        <dbReference type="ChEBI" id="CHEBI:15378"/>
        <dbReference type="ChEBI" id="CHEBI:30616"/>
        <dbReference type="ChEBI" id="CHEBI:43474"/>
        <dbReference type="ChEBI" id="CHEBI:57932"/>
        <dbReference type="ChEBI" id="CHEBI:456216"/>
        <dbReference type="EC" id="7.4.2.11"/>
    </reaction>
</comment>
<comment type="subunit">
    <text evidence="1">The complex is composed of two ATP-binding proteins (MetN), two transmembrane proteins (MetI) and a solute-binding protein (MetQ).</text>
</comment>
<comment type="subcellular location">
    <subcellularLocation>
        <location evidence="1">Cell membrane</location>
        <topology evidence="1">Peripheral membrane protein</topology>
    </subcellularLocation>
</comment>
<comment type="similarity">
    <text evidence="1">Belongs to the ABC transporter superfamily. Methionine importer (TC 3.A.1.24) family.</text>
</comment>
<gene>
    <name evidence="1" type="primary">metN</name>
    <name type="ordered locus">STH253</name>
</gene>
<dbReference type="EC" id="7.4.2.11" evidence="1"/>
<dbReference type="EMBL" id="AP006840">
    <property type="protein sequence ID" value="BAD39238.1"/>
    <property type="molecule type" value="Genomic_DNA"/>
</dbReference>
<dbReference type="RefSeq" id="WP_011194388.1">
    <property type="nucleotide sequence ID" value="NC_006177.1"/>
</dbReference>
<dbReference type="SMR" id="Q67SV5"/>
<dbReference type="STRING" id="292459.STH253"/>
<dbReference type="KEGG" id="sth:STH253"/>
<dbReference type="eggNOG" id="COG1135">
    <property type="taxonomic scope" value="Bacteria"/>
</dbReference>
<dbReference type="HOGENOM" id="CLU_000604_1_3_9"/>
<dbReference type="OrthoDB" id="9802264at2"/>
<dbReference type="Proteomes" id="UP000000417">
    <property type="component" value="Chromosome"/>
</dbReference>
<dbReference type="GO" id="GO:0005886">
    <property type="term" value="C:plasma membrane"/>
    <property type="evidence" value="ECO:0007669"/>
    <property type="project" value="UniProtKB-SubCell"/>
</dbReference>
<dbReference type="GO" id="GO:0033232">
    <property type="term" value="F:ABC-type D-methionine transporter activity"/>
    <property type="evidence" value="ECO:0007669"/>
    <property type="project" value="UniProtKB-EC"/>
</dbReference>
<dbReference type="GO" id="GO:0005524">
    <property type="term" value="F:ATP binding"/>
    <property type="evidence" value="ECO:0007669"/>
    <property type="project" value="UniProtKB-KW"/>
</dbReference>
<dbReference type="GO" id="GO:0016887">
    <property type="term" value="F:ATP hydrolysis activity"/>
    <property type="evidence" value="ECO:0007669"/>
    <property type="project" value="InterPro"/>
</dbReference>
<dbReference type="CDD" id="cd03258">
    <property type="entry name" value="ABC_MetN_methionine_transporter"/>
    <property type="match status" value="1"/>
</dbReference>
<dbReference type="FunFam" id="3.40.50.300:FF:000056">
    <property type="entry name" value="Cell division ATP-binding protein FtsE"/>
    <property type="match status" value="1"/>
</dbReference>
<dbReference type="Gene3D" id="3.30.70.260">
    <property type="match status" value="1"/>
</dbReference>
<dbReference type="Gene3D" id="3.40.50.300">
    <property type="entry name" value="P-loop containing nucleotide triphosphate hydrolases"/>
    <property type="match status" value="1"/>
</dbReference>
<dbReference type="InterPro" id="IPR003593">
    <property type="entry name" value="AAA+_ATPase"/>
</dbReference>
<dbReference type="InterPro" id="IPR003439">
    <property type="entry name" value="ABC_transporter-like_ATP-bd"/>
</dbReference>
<dbReference type="InterPro" id="IPR017871">
    <property type="entry name" value="ABC_transporter-like_CS"/>
</dbReference>
<dbReference type="InterPro" id="IPR045865">
    <property type="entry name" value="ACT-like_dom_sf"/>
</dbReference>
<dbReference type="InterPro" id="IPR041701">
    <property type="entry name" value="MetN_ABC"/>
</dbReference>
<dbReference type="InterPro" id="IPR050086">
    <property type="entry name" value="MetN_ABC_transporter-like"/>
</dbReference>
<dbReference type="InterPro" id="IPR018449">
    <property type="entry name" value="NIL_domain"/>
</dbReference>
<dbReference type="InterPro" id="IPR027417">
    <property type="entry name" value="P-loop_NTPase"/>
</dbReference>
<dbReference type="PANTHER" id="PTHR43166">
    <property type="entry name" value="AMINO ACID IMPORT ATP-BINDING PROTEIN"/>
    <property type="match status" value="1"/>
</dbReference>
<dbReference type="PANTHER" id="PTHR43166:SF30">
    <property type="entry name" value="METHIONINE IMPORT ATP-BINDING PROTEIN METN"/>
    <property type="match status" value="1"/>
</dbReference>
<dbReference type="Pfam" id="PF00005">
    <property type="entry name" value="ABC_tran"/>
    <property type="match status" value="1"/>
</dbReference>
<dbReference type="Pfam" id="PF09383">
    <property type="entry name" value="NIL"/>
    <property type="match status" value="1"/>
</dbReference>
<dbReference type="SMART" id="SM00382">
    <property type="entry name" value="AAA"/>
    <property type="match status" value="1"/>
</dbReference>
<dbReference type="SMART" id="SM00930">
    <property type="entry name" value="NIL"/>
    <property type="match status" value="1"/>
</dbReference>
<dbReference type="SUPFAM" id="SSF55021">
    <property type="entry name" value="ACT-like"/>
    <property type="match status" value="1"/>
</dbReference>
<dbReference type="SUPFAM" id="SSF52540">
    <property type="entry name" value="P-loop containing nucleoside triphosphate hydrolases"/>
    <property type="match status" value="1"/>
</dbReference>
<dbReference type="PROSITE" id="PS00211">
    <property type="entry name" value="ABC_TRANSPORTER_1"/>
    <property type="match status" value="1"/>
</dbReference>
<dbReference type="PROSITE" id="PS50893">
    <property type="entry name" value="ABC_TRANSPORTER_2"/>
    <property type="match status" value="1"/>
</dbReference>
<dbReference type="PROSITE" id="PS51264">
    <property type="entry name" value="METN"/>
    <property type="match status" value="1"/>
</dbReference>
<feature type="chain" id="PRO_0000270431" description="Methionine import ATP-binding protein MetN">
    <location>
        <begin position="1"/>
        <end position="332"/>
    </location>
</feature>
<feature type="domain" description="ABC transporter" evidence="1">
    <location>
        <begin position="2"/>
        <end position="241"/>
    </location>
</feature>
<feature type="binding site" evidence="1">
    <location>
        <begin position="38"/>
        <end position="45"/>
    </location>
    <ligand>
        <name>ATP</name>
        <dbReference type="ChEBI" id="CHEBI:30616"/>
    </ligand>
</feature>
<proteinExistence type="inferred from homology"/>
<protein>
    <recommendedName>
        <fullName evidence="1">Methionine import ATP-binding protein MetN</fullName>
        <ecNumber evidence="1">7.4.2.11</ecNumber>
    </recommendedName>
</protein>
<reference key="1">
    <citation type="journal article" date="2004" name="Nucleic Acids Res.">
        <title>Genome sequence of Symbiobacterium thermophilum, an uncultivable bacterium that depends on microbial commensalism.</title>
        <authorList>
            <person name="Ueda K."/>
            <person name="Yamashita A."/>
            <person name="Ishikawa J."/>
            <person name="Shimada M."/>
            <person name="Watsuji T."/>
            <person name="Morimura K."/>
            <person name="Ikeda H."/>
            <person name="Hattori M."/>
            <person name="Beppu T."/>
        </authorList>
    </citation>
    <scope>NUCLEOTIDE SEQUENCE [LARGE SCALE GENOMIC DNA]</scope>
    <source>
        <strain>DSM 24528 / JCM 14929 / IAM 14863 / T</strain>
    </source>
</reference>
<keyword id="KW-0029">Amino-acid transport</keyword>
<keyword id="KW-0067">ATP-binding</keyword>
<keyword id="KW-1003">Cell membrane</keyword>
<keyword id="KW-0472">Membrane</keyword>
<keyword id="KW-0547">Nucleotide-binding</keyword>
<keyword id="KW-1185">Reference proteome</keyword>
<keyword id="KW-1278">Translocase</keyword>
<keyword id="KW-0813">Transport</keyword>
<organism>
    <name type="scientific">Symbiobacterium thermophilum (strain DSM 24528 / JCM 14929 / IAM 14863 / T)</name>
    <dbReference type="NCBI Taxonomy" id="292459"/>
    <lineage>
        <taxon>Bacteria</taxon>
        <taxon>Bacillati</taxon>
        <taxon>Bacillota</taxon>
        <taxon>Clostridia</taxon>
        <taxon>Eubacteriales</taxon>
        <taxon>Symbiobacteriaceae</taxon>
        <taxon>Symbiobacterium</taxon>
    </lineage>
</organism>
<accession>Q67SV5</accession>
<evidence type="ECO:0000255" key="1">
    <source>
        <dbReference type="HAMAP-Rule" id="MF_01719"/>
    </source>
</evidence>
<name>METN_SYMTH</name>